<protein>
    <recommendedName>
        <fullName>Oligopeptide transport system permease protein AmiD</fullName>
    </recommendedName>
</protein>
<sequence length="308" mass="34635">MSTIDKEKFQFVKRDDFASETIDAPAYSYWKSVFKQFMKKKSTVVMLGILVAIILISFIYPMFSKFDFNDVSKVNDFSVRYIKPNAEHWFGTDSNGKSLFDGVWFGARNSILISVIATVINLVIGVFVGGIWGISKSVDRVMMEVYNVISNIPPLLIVIVLTYSIGAGFWNLIFAMSVTTWIGIAFMIRVQILRYRDLEYNLASRTLGTPTLKIVAKNIMPQLVSVIVTTMTQMLPSFISYEAFLSFFGLGLPITVPSLGRLISDYSQNVTTNAYLFWIPLTTLVLVSLSLFVVGQNLADASDPRTHR</sequence>
<reference key="1">
    <citation type="journal article" date="2001" name="J. Bacteriol.">
        <title>Genome of the bacterium Streptococcus pneumoniae strain R6.</title>
        <authorList>
            <person name="Hoskins J."/>
            <person name="Alborn W.E. Jr."/>
            <person name="Arnold J."/>
            <person name="Blaszczak L.C."/>
            <person name="Burgett S."/>
            <person name="DeHoff B.S."/>
            <person name="Estrem S.T."/>
            <person name="Fritz L."/>
            <person name="Fu D.-J."/>
            <person name="Fuller W."/>
            <person name="Geringer C."/>
            <person name="Gilmour R."/>
            <person name="Glass J.S."/>
            <person name="Khoja H."/>
            <person name="Kraft A.R."/>
            <person name="Lagace R.E."/>
            <person name="LeBlanc D.J."/>
            <person name="Lee L.N."/>
            <person name="Lefkowitz E.J."/>
            <person name="Lu J."/>
            <person name="Matsushima P."/>
            <person name="McAhren S.M."/>
            <person name="McHenney M."/>
            <person name="McLeaster K."/>
            <person name="Mundy C.W."/>
            <person name="Nicas T.I."/>
            <person name="Norris F.H."/>
            <person name="O'Gara M."/>
            <person name="Peery R.B."/>
            <person name="Robertson G.T."/>
            <person name="Rockey P."/>
            <person name="Sun P.-M."/>
            <person name="Winkler M.E."/>
            <person name="Yang Y."/>
            <person name="Young-Bellido M."/>
            <person name="Zhao G."/>
            <person name="Zook C.A."/>
            <person name="Baltz R.H."/>
            <person name="Jaskunas S.R."/>
            <person name="Rosteck P.R. Jr."/>
            <person name="Skatrud P.L."/>
            <person name="Glass J.I."/>
        </authorList>
    </citation>
    <scope>NUCLEOTIDE SEQUENCE [LARGE SCALE GENOMIC DNA]</scope>
    <source>
        <strain>ATCC BAA-255 / R6</strain>
    </source>
</reference>
<gene>
    <name type="primary">amiD</name>
    <name type="ordered locus">spr1705</name>
</gene>
<organism>
    <name type="scientific">Streptococcus pneumoniae (strain ATCC BAA-255 / R6)</name>
    <dbReference type="NCBI Taxonomy" id="171101"/>
    <lineage>
        <taxon>Bacteria</taxon>
        <taxon>Bacillati</taxon>
        <taxon>Bacillota</taxon>
        <taxon>Bacilli</taxon>
        <taxon>Lactobacillales</taxon>
        <taxon>Streptococcaceae</taxon>
        <taxon>Streptococcus</taxon>
    </lineage>
</organism>
<name>AMID_STRR6</name>
<proteinExistence type="inferred from homology"/>
<accession>P0A4N0</accession>
<accession>P18794</accession>
<comment type="function">
    <text evidence="1">Part of the binding-protein-dependent transport system for oligopeptides; probably responsible for the translocation of the substrate across the membrane.</text>
</comment>
<comment type="subcellular location">
    <subcellularLocation>
        <location evidence="3">Cell membrane</location>
        <topology evidence="2">Multi-pass membrane protein</topology>
    </subcellularLocation>
</comment>
<comment type="similarity">
    <text evidence="3">Belongs to the binding-protein-dependent transport system permease family. OppBC subfamily.</text>
</comment>
<dbReference type="EMBL" id="AE007317">
    <property type="protein sequence ID" value="AAL00508.1"/>
    <property type="molecule type" value="Genomic_DNA"/>
</dbReference>
<dbReference type="PIR" id="G98084">
    <property type="entry name" value="G98084"/>
</dbReference>
<dbReference type="RefSeq" id="NP_359297.1">
    <property type="nucleotide sequence ID" value="NC_003098.1"/>
</dbReference>
<dbReference type="SMR" id="P0A4N0"/>
<dbReference type="STRING" id="171101.spr1705"/>
<dbReference type="KEGG" id="spr:spr1705"/>
<dbReference type="PATRIC" id="fig|171101.6.peg.1844"/>
<dbReference type="eggNOG" id="COG1173">
    <property type="taxonomic scope" value="Bacteria"/>
</dbReference>
<dbReference type="HOGENOM" id="CLU_028518_1_0_9"/>
<dbReference type="Proteomes" id="UP000000586">
    <property type="component" value="Chromosome"/>
</dbReference>
<dbReference type="GO" id="GO:0005886">
    <property type="term" value="C:plasma membrane"/>
    <property type="evidence" value="ECO:0000318"/>
    <property type="project" value="GO_Central"/>
</dbReference>
<dbReference type="GO" id="GO:0022857">
    <property type="term" value="F:transmembrane transporter activity"/>
    <property type="evidence" value="ECO:0000318"/>
    <property type="project" value="GO_Central"/>
</dbReference>
<dbReference type="GO" id="GO:0015833">
    <property type="term" value="P:peptide transport"/>
    <property type="evidence" value="ECO:0007669"/>
    <property type="project" value="UniProtKB-KW"/>
</dbReference>
<dbReference type="GO" id="GO:0015031">
    <property type="term" value="P:protein transport"/>
    <property type="evidence" value="ECO:0007669"/>
    <property type="project" value="UniProtKB-KW"/>
</dbReference>
<dbReference type="CDD" id="cd06261">
    <property type="entry name" value="TM_PBP2"/>
    <property type="match status" value="1"/>
</dbReference>
<dbReference type="Gene3D" id="1.10.3720.10">
    <property type="entry name" value="MetI-like"/>
    <property type="match status" value="1"/>
</dbReference>
<dbReference type="InterPro" id="IPR050366">
    <property type="entry name" value="BP-dependent_transpt_permease"/>
</dbReference>
<dbReference type="InterPro" id="IPR000515">
    <property type="entry name" value="MetI-like"/>
</dbReference>
<dbReference type="InterPro" id="IPR035906">
    <property type="entry name" value="MetI-like_sf"/>
</dbReference>
<dbReference type="InterPro" id="IPR025966">
    <property type="entry name" value="OppC_N"/>
</dbReference>
<dbReference type="InterPro" id="IPR054864">
    <property type="entry name" value="OppC_permease"/>
</dbReference>
<dbReference type="NCBIfam" id="NF043080">
    <property type="entry name" value="MMSYN1_0166"/>
    <property type="match status" value="1"/>
</dbReference>
<dbReference type="PANTHER" id="PTHR43386:SF24">
    <property type="entry name" value="OLIGOPEPTIDE TRANSPORT SYSTEM PERMEASE PROTEIN AMID"/>
    <property type="match status" value="1"/>
</dbReference>
<dbReference type="PANTHER" id="PTHR43386">
    <property type="entry name" value="OLIGOPEPTIDE TRANSPORT SYSTEM PERMEASE PROTEIN APPC"/>
    <property type="match status" value="1"/>
</dbReference>
<dbReference type="Pfam" id="PF00528">
    <property type="entry name" value="BPD_transp_1"/>
    <property type="match status" value="1"/>
</dbReference>
<dbReference type="Pfam" id="PF12911">
    <property type="entry name" value="OppC_N"/>
    <property type="match status" value="1"/>
</dbReference>
<dbReference type="SUPFAM" id="SSF161098">
    <property type="entry name" value="MetI-like"/>
    <property type="match status" value="1"/>
</dbReference>
<dbReference type="PROSITE" id="PS50928">
    <property type="entry name" value="ABC_TM1"/>
    <property type="match status" value="1"/>
</dbReference>
<evidence type="ECO:0000250" key="1"/>
<evidence type="ECO:0000255" key="2">
    <source>
        <dbReference type="PROSITE-ProRule" id="PRU00441"/>
    </source>
</evidence>
<evidence type="ECO:0000305" key="3"/>
<feature type="chain" id="PRO_0000059946" description="Oligopeptide transport system permease protein AmiD">
    <location>
        <begin position="1"/>
        <end position="308"/>
    </location>
</feature>
<feature type="transmembrane region" description="Helical" evidence="2">
    <location>
        <begin position="43"/>
        <end position="63"/>
    </location>
</feature>
<feature type="transmembrane region" description="Helical" evidence="2">
    <location>
        <begin position="111"/>
        <end position="131"/>
    </location>
</feature>
<feature type="transmembrane region" description="Helical" evidence="2">
    <location>
        <begin position="145"/>
        <end position="167"/>
    </location>
</feature>
<feature type="transmembrane region" description="Helical" evidence="2">
    <location>
        <begin position="171"/>
        <end position="193"/>
    </location>
</feature>
<feature type="transmembrane region" description="Helical" evidence="2">
    <location>
        <begin position="234"/>
        <end position="254"/>
    </location>
</feature>
<feature type="transmembrane region" description="Helical" evidence="2">
    <location>
        <begin position="274"/>
        <end position="294"/>
    </location>
</feature>
<feature type="domain" description="ABC transmembrane type-1" evidence="2">
    <location>
        <begin position="107"/>
        <end position="295"/>
    </location>
</feature>
<keyword id="KW-1003">Cell membrane</keyword>
<keyword id="KW-0472">Membrane</keyword>
<keyword id="KW-0571">Peptide transport</keyword>
<keyword id="KW-0653">Protein transport</keyword>
<keyword id="KW-1185">Reference proteome</keyword>
<keyword id="KW-0812">Transmembrane</keyword>
<keyword id="KW-1133">Transmembrane helix</keyword>
<keyword id="KW-0813">Transport</keyword>